<reference key="1">
    <citation type="journal article" date="2000" name="Nature">
        <title>Complete genome sequence of Pseudomonas aeruginosa PAO1, an opportunistic pathogen.</title>
        <authorList>
            <person name="Stover C.K."/>
            <person name="Pham X.-Q.T."/>
            <person name="Erwin A.L."/>
            <person name="Mizoguchi S.D."/>
            <person name="Warrener P."/>
            <person name="Hickey M.J."/>
            <person name="Brinkman F.S.L."/>
            <person name="Hufnagle W.O."/>
            <person name="Kowalik D.J."/>
            <person name="Lagrou M."/>
            <person name="Garber R.L."/>
            <person name="Goltry L."/>
            <person name="Tolentino E."/>
            <person name="Westbrock-Wadman S."/>
            <person name="Yuan Y."/>
            <person name="Brody L.L."/>
            <person name="Coulter S.N."/>
            <person name="Folger K.R."/>
            <person name="Kas A."/>
            <person name="Larbig K."/>
            <person name="Lim R.M."/>
            <person name="Smith K.A."/>
            <person name="Spencer D.H."/>
            <person name="Wong G.K.-S."/>
            <person name="Wu Z."/>
            <person name="Paulsen I.T."/>
            <person name="Reizer J."/>
            <person name="Saier M.H. Jr."/>
            <person name="Hancock R.E.W."/>
            <person name="Lory S."/>
            <person name="Olson M.V."/>
        </authorList>
    </citation>
    <scope>NUCLEOTIDE SEQUENCE [LARGE SCALE GENOMIC DNA]</scope>
    <source>
        <strain>ATCC 15692 / DSM 22644 / CIP 104116 / JCM 14847 / LMG 12228 / 1C / PRS 101 / PAO1</strain>
    </source>
</reference>
<dbReference type="EC" id="1.9.6.1" evidence="1"/>
<dbReference type="EMBL" id="AE004091">
    <property type="protein sequence ID" value="AAG04563.1"/>
    <property type="molecule type" value="Genomic_DNA"/>
</dbReference>
<dbReference type="PIR" id="F83499">
    <property type="entry name" value="F83499"/>
</dbReference>
<dbReference type="RefSeq" id="NP_249865.1">
    <property type="nucleotide sequence ID" value="NC_002516.2"/>
</dbReference>
<dbReference type="RefSeq" id="WP_010895543.1">
    <property type="nucleotide sequence ID" value="NC_002516.2"/>
</dbReference>
<dbReference type="SMR" id="Q9I4G3"/>
<dbReference type="FunCoup" id="Q9I4G3">
    <property type="interactions" value="94"/>
</dbReference>
<dbReference type="STRING" id="208964.PA1174"/>
<dbReference type="PaxDb" id="208964-PA1174"/>
<dbReference type="GeneID" id="878409"/>
<dbReference type="KEGG" id="pae:PA1174"/>
<dbReference type="PATRIC" id="fig|208964.12.peg.1219"/>
<dbReference type="PseudoCAP" id="PA1174"/>
<dbReference type="HOGENOM" id="CLU_000422_13_4_6"/>
<dbReference type="InParanoid" id="Q9I4G3"/>
<dbReference type="OrthoDB" id="9810782at2"/>
<dbReference type="PhylomeDB" id="Q9I4G3"/>
<dbReference type="BioCyc" id="PAER208964:G1FZ6-1199-MONOMER"/>
<dbReference type="Proteomes" id="UP000002438">
    <property type="component" value="Chromosome"/>
</dbReference>
<dbReference type="GO" id="GO:0016020">
    <property type="term" value="C:membrane"/>
    <property type="evidence" value="ECO:0000318"/>
    <property type="project" value="GO_Central"/>
</dbReference>
<dbReference type="GO" id="GO:0009325">
    <property type="term" value="C:nitrate reductase complex"/>
    <property type="evidence" value="ECO:0000318"/>
    <property type="project" value="GO_Central"/>
</dbReference>
<dbReference type="GO" id="GO:0042597">
    <property type="term" value="C:periplasmic space"/>
    <property type="evidence" value="ECO:0007669"/>
    <property type="project" value="UniProtKB-SubCell"/>
</dbReference>
<dbReference type="GO" id="GO:0051539">
    <property type="term" value="F:4 iron, 4 sulfur cluster binding"/>
    <property type="evidence" value="ECO:0007669"/>
    <property type="project" value="UniProtKB-KW"/>
</dbReference>
<dbReference type="GO" id="GO:0009055">
    <property type="term" value="F:electron transfer activity"/>
    <property type="evidence" value="ECO:0007669"/>
    <property type="project" value="UniProtKB-UniRule"/>
</dbReference>
<dbReference type="GO" id="GO:0005506">
    <property type="term" value="F:iron ion binding"/>
    <property type="evidence" value="ECO:0007669"/>
    <property type="project" value="UniProtKB-UniRule"/>
</dbReference>
<dbReference type="GO" id="GO:0030151">
    <property type="term" value="F:molybdenum ion binding"/>
    <property type="evidence" value="ECO:0000318"/>
    <property type="project" value="GO_Central"/>
</dbReference>
<dbReference type="GO" id="GO:0043546">
    <property type="term" value="F:molybdopterin cofactor binding"/>
    <property type="evidence" value="ECO:0007669"/>
    <property type="project" value="InterPro"/>
</dbReference>
<dbReference type="GO" id="GO:0050140">
    <property type="term" value="F:nitrate reductase (cytochrome) activity"/>
    <property type="evidence" value="ECO:0007669"/>
    <property type="project" value="UniProtKB-EC"/>
</dbReference>
<dbReference type="GO" id="GO:0008940">
    <property type="term" value="F:nitrate reductase activity"/>
    <property type="evidence" value="ECO:0000318"/>
    <property type="project" value="GO_Central"/>
</dbReference>
<dbReference type="GO" id="GO:0045333">
    <property type="term" value="P:cellular respiration"/>
    <property type="evidence" value="ECO:0007669"/>
    <property type="project" value="UniProtKB-ARBA"/>
</dbReference>
<dbReference type="GO" id="GO:0006777">
    <property type="term" value="P:Mo-molybdopterin cofactor biosynthetic process"/>
    <property type="evidence" value="ECO:0007669"/>
    <property type="project" value="UniProtKB-UniRule"/>
</dbReference>
<dbReference type="GO" id="GO:0042128">
    <property type="term" value="P:nitrate assimilation"/>
    <property type="evidence" value="ECO:0007669"/>
    <property type="project" value="UniProtKB-UniRule"/>
</dbReference>
<dbReference type="CDD" id="cd02791">
    <property type="entry name" value="MopB_CT_Nitrate-R-NapA-like"/>
    <property type="match status" value="1"/>
</dbReference>
<dbReference type="CDD" id="cd02754">
    <property type="entry name" value="MopB_Nitrate-R-NapA-like"/>
    <property type="match status" value="1"/>
</dbReference>
<dbReference type="FunFam" id="2.40.40.20:FF:000005">
    <property type="entry name" value="Periplasmic nitrate reductase"/>
    <property type="match status" value="1"/>
</dbReference>
<dbReference type="Gene3D" id="2.40.40.20">
    <property type="match status" value="1"/>
</dbReference>
<dbReference type="Gene3D" id="3.30.200.210">
    <property type="match status" value="1"/>
</dbReference>
<dbReference type="Gene3D" id="3.40.50.740">
    <property type="match status" value="1"/>
</dbReference>
<dbReference type="Gene3D" id="3.40.228.10">
    <property type="entry name" value="Dimethylsulfoxide Reductase, domain 2"/>
    <property type="match status" value="1"/>
</dbReference>
<dbReference type="HAMAP" id="MF_01630">
    <property type="entry name" value="Nitrate_reduct_NapA"/>
    <property type="match status" value="1"/>
</dbReference>
<dbReference type="InterPro" id="IPR009010">
    <property type="entry name" value="Asp_de-COase-like_dom_sf"/>
</dbReference>
<dbReference type="InterPro" id="IPR041957">
    <property type="entry name" value="CT_Nitrate-R-NapA-like"/>
</dbReference>
<dbReference type="InterPro" id="IPR006657">
    <property type="entry name" value="MoPterin_dinucl-bd_dom"/>
</dbReference>
<dbReference type="InterPro" id="IPR006656">
    <property type="entry name" value="Mopterin_OxRdtase"/>
</dbReference>
<dbReference type="InterPro" id="IPR006963">
    <property type="entry name" value="Mopterin_OxRdtase_4Fe-4S_dom"/>
</dbReference>
<dbReference type="InterPro" id="IPR027467">
    <property type="entry name" value="MopterinOxRdtase_cofactor_BS"/>
</dbReference>
<dbReference type="InterPro" id="IPR010051">
    <property type="entry name" value="Periplasm_NO3_reductase_lsu"/>
</dbReference>
<dbReference type="InterPro" id="IPR050123">
    <property type="entry name" value="Prok_molybdopt-oxidoreductase"/>
</dbReference>
<dbReference type="NCBIfam" id="TIGR01706">
    <property type="entry name" value="NAPA"/>
    <property type="match status" value="1"/>
</dbReference>
<dbReference type="NCBIfam" id="NF010055">
    <property type="entry name" value="PRK13532.1"/>
    <property type="match status" value="1"/>
</dbReference>
<dbReference type="PANTHER" id="PTHR43105:SF11">
    <property type="entry name" value="PERIPLASMIC NITRATE REDUCTASE"/>
    <property type="match status" value="1"/>
</dbReference>
<dbReference type="PANTHER" id="PTHR43105">
    <property type="entry name" value="RESPIRATORY NITRATE REDUCTASE"/>
    <property type="match status" value="1"/>
</dbReference>
<dbReference type="Pfam" id="PF04879">
    <property type="entry name" value="Molybdop_Fe4S4"/>
    <property type="match status" value="1"/>
</dbReference>
<dbReference type="Pfam" id="PF00384">
    <property type="entry name" value="Molybdopterin"/>
    <property type="match status" value="1"/>
</dbReference>
<dbReference type="Pfam" id="PF01568">
    <property type="entry name" value="Molydop_binding"/>
    <property type="match status" value="1"/>
</dbReference>
<dbReference type="SMART" id="SM00926">
    <property type="entry name" value="Molybdop_Fe4S4"/>
    <property type="match status" value="1"/>
</dbReference>
<dbReference type="SUPFAM" id="SSF50692">
    <property type="entry name" value="ADC-like"/>
    <property type="match status" value="1"/>
</dbReference>
<dbReference type="SUPFAM" id="SSF53706">
    <property type="entry name" value="Formate dehydrogenase/DMSO reductase, domains 1-3"/>
    <property type="match status" value="1"/>
</dbReference>
<dbReference type="PROSITE" id="PS51669">
    <property type="entry name" value="4FE4S_MOW_BIS_MGD"/>
    <property type="match status" value="1"/>
</dbReference>
<dbReference type="PROSITE" id="PS00551">
    <property type="entry name" value="MOLYBDOPTERIN_PROK_1"/>
    <property type="match status" value="1"/>
</dbReference>
<comment type="function">
    <text evidence="1">Catalytic subunit of the periplasmic nitrate reductase complex NapAB. Receives electrons from NapB and catalyzes the reduction of nitrate to nitrite.</text>
</comment>
<comment type="catalytic activity">
    <reaction evidence="1">
        <text>2 Fe(II)-[cytochrome] + nitrate + 2 H(+) = 2 Fe(III)-[cytochrome] + nitrite + H2O</text>
        <dbReference type="Rhea" id="RHEA:12909"/>
        <dbReference type="Rhea" id="RHEA-COMP:11777"/>
        <dbReference type="Rhea" id="RHEA-COMP:11778"/>
        <dbReference type="ChEBI" id="CHEBI:15377"/>
        <dbReference type="ChEBI" id="CHEBI:15378"/>
        <dbReference type="ChEBI" id="CHEBI:16301"/>
        <dbReference type="ChEBI" id="CHEBI:17632"/>
        <dbReference type="ChEBI" id="CHEBI:29033"/>
        <dbReference type="ChEBI" id="CHEBI:29034"/>
        <dbReference type="EC" id="1.9.6.1"/>
    </reaction>
</comment>
<comment type="cofactor">
    <cofactor evidence="1">
        <name>[4Fe-4S] cluster</name>
        <dbReference type="ChEBI" id="CHEBI:49883"/>
    </cofactor>
    <text evidence="1">Binds 1 [4Fe-4S] cluster.</text>
</comment>
<comment type="cofactor">
    <cofactor evidence="1">
        <name>Mo-bis(molybdopterin guanine dinucleotide)</name>
        <dbReference type="ChEBI" id="CHEBI:60539"/>
    </cofactor>
    <text evidence="1">Binds 1 molybdenum-bis(molybdopterin guanine dinucleotide) (Mo-bis-MGD) cofactor per subunit.</text>
</comment>
<comment type="subunit">
    <text evidence="1">Component of the periplasmic nitrate reductase NapAB complex composed of NapA and NapB.</text>
</comment>
<comment type="subcellular location">
    <subcellularLocation>
        <location evidence="1">Periplasm</location>
    </subcellularLocation>
</comment>
<comment type="similarity">
    <text evidence="1">Belongs to the prokaryotic molybdopterin-containing oxidoreductase family. NasA/NapA/NarB subfamily.</text>
</comment>
<name>NAPA_PSEAE</name>
<protein>
    <recommendedName>
        <fullName evidence="1">Periplasmic nitrate reductase</fullName>
        <ecNumber evidence="1">1.9.6.1</ecNumber>
    </recommendedName>
</protein>
<sequence>MNSPRPTPPPFAAAAAGLPILVRASNLVTEADVTSLVWNKAPCRFCGTGCSVMVATRDGQVVATHGDIKAEVNRGINCVKGYFLSKIMYGSDRLTRPLLRMKDGKFDKQGEFQPISWEQAFDIMAEKFKAALKAKGPESVGMFGSGQWTVWEGYAANKLFKAGLRSNNIDPNARHCMASAVMGFMRSFGMDEPMGCYDDIEATDSFVLWGSNMAEMHPVLWSRVTDRRLSAPQVKVAVLSTFEHRSFELADLPMVFKPQTDLIILNYIANHIIESGAVNRDFVERHVRFAHGAEDIGYGLRPDDPLEKKAKNADKANTWSDIDFKAFAEFVKPYTLERTARESGVPAERLKALAELYADPKRKVVSFWTMGFNQHTRGVWANNLIYNIHLLTGKISEPGNSPFSLTGQPSACGTAREVGTFSHRLPADLVVTNPKHRETAEKIWKVPAGTIQEKVGFHAVQQSRMLKDGVLNVYWTQVSNNMQAGPNVMQEVLPGWRNPDNFVIVSDVYPTVSAQAADLILPSAMWVEKEGAFGNAERRTQFWHQLVKAPGEAKSDLWQLVEFSKRFTTDEVWPAELLAKAPELKGKTLYDVLFRNGQVDRFPASDLAKGYANDEVDAFGFYIQKGLFEEYAAFGRGHGHDLAPFDAYHEARGLRWPVVDGKETRWRYREGYDPYVSKGSGVQFYGYPDKKAIVFALPYEPPAEAPDQDYPFWLATGRVLEHWHTGSMTARVPELYKAVPDALVYMHPEDARQLKLRRGSEVKVVSRRGEIRARVETRGRNKPPQGLVFVPFFDANKLINKVTLDATDPISKQTDYKKCAVRIELLNLA</sequence>
<proteinExistence type="inferred from homology"/>
<organism>
    <name type="scientific">Pseudomonas aeruginosa (strain ATCC 15692 / DSM 22644 / CIP 104116 / JCM 14847 / LMG 12228 / 1C / PRS 101 / PAO1)</name>
    <dbReference type="NCBI Taxonomy" id="208964"/>
    <lineage>
        <taxon>Bacteria</taxon>
        <taxon>Pseudomonadati</taxon>
        <taxon>Pseudomonadota</taxon>
        <taxon>Gammaproteobacteria</taxon>
        <taxon>Pseudomonadales</taxon>
        <taxon>Pseudomonadaceae</taxon>
        <taxon>Pseudomonas</taxon>
    </lineage>
</organism>
<feature type="signal peptide" evidence="1">
    <location>
        <begin position="1"/>
        <end position="30"/>
    </location>
</feature>
<feature type="chain" id="PRO_0000045995" description="Periplasmic nitrate reductase" evidence="1">
    <location>
        <begin position="31"/>
        <end position="829"/>
    </location>
</feature>
<feature type="domain" description="4Fe-4S Mo/W bis-MGD-type" evidence="1">
    <location>
        <begin position="36"/>
        <end position="92"/>
    </location>
</feature>
<feature type="binding site" evidence="1">
    <location>
        <position position="43"/>
    </location>
    <ligand>
        <name>[4Fe-4S] cluster</name>
        <dbReference type="ChEBI" id="CHEBI:49883"/>
    </ligand>
</feature>
<feature type="binding site" evidence="1">
    <location>
        <position position="46"/>
    </location>
    <ligand>
        <name>[4Fe-4S] cluster</name>
        <dbReference type="ChEBI" id="CHEBI:49883"/>
    </ligand>
</feature>
<feature type="binding site" evidence="1">
    <location>
        <position position="50"/>
    </location>
    <ligand>
        <name>[4Fe-4S] cluster</name>
        <dbReference type="ChEBI" id="CHEBI:49883"/>
    </ligand>
</feature>
<feature type="binding site" evidence="1">
    <location>
        <position position="78"/>
    </location>
    <ligand>
        <name>[4Fe-4S] cluster</name>
        <dbReference type="ChEBI" id="CHEBI:49883"/>
    </ligand>
</feature>
<feature type="binding site" evidence="1">
    <location>
        <position position="80"/>
    </location>
    <ligand>
        <name>Mo-bis(molybdopterin guanine dinucleotide)</name>
        <dbReference type="ChEBI" id="CHEBI:60539"/>
    </ligand>
</feature>
<feature type="binding site" evidence="1">
    <location>
        <position position="147"/>
    </location>
    <ligand>
        <name>Mo-bis(molybdopterin guanine dinucleotide)</name>
        <dbReference type="ChEBI" id="CHEBI:60539"/>
    </ligand>
</feature>
<feature type="binding site" evidence="1">
    <location>
        <position position="172"/>
    </location>
    <ligand>
        <name>Mo-bis(molybdopterin guanine dinucleotide)</name>
        <dbReference type="ChEBI" id="CHEBI:60539"/>
    </ligand>
</feature>
<feature type="binding site" evidence="1">
    <location>
        <position position="176"/>
    </location>
    <ligand>
        <name>Mo-bis(molybdopterin guanine dinucleotide)</name>
        <dbReference type="ChEBI" id="CHEBI:60539"/>
    </ligand>
</feature>
<feature type="binding site" evidence="1">
    <location>
        <begin position="209"/>
        <end position="216"/>
    </location>
    <ligand>
        <name>Mo-bis(molybdopterin guanine dinucleotide)</name>
        <dbReference type="ChEBI" id="CHEBI:60539"/>
    </ligand>
</feature>
<feature type="binding site" evidence="1">
    <location>
        <begin position="240"/>
        <end position="244"/>
    </location>
    <ligand>
        <name>Mo-bis(molybdopterin guanine dinucleotide)</name>
        <dbReference type="ChEBI" id="CHEBI:60539"/>
    </ligand>
</feature>
<feature type="binding site" evidence="1">
    <location>
        <begin position="259"/>
        <end position="261"/>
    </location>
    <ligand>
        <name>Mo-bis(molybdopterin guanine dinucleotide)</name>
        <dbReference type="ChEBI" id="CHEBI:60539"/>
    </ligand>
</feature>
<feature type="binding site" evidence="1">
    <location>
        <position position="370"/>
    </location>
    <ligand>
        <name>Mo-bis(molybdopterin guanine dinucleotide)</name>
        <dbReference type="ChEBI" id="CHEBI:60539"/>
    </ligand>
</feature>
<feature type="binding site" evidence="1">
    <location>
        <position position="374"/>
    </location>
    <ligand>
        <name>Mo-bis(molybdopterin guanine dinucleotide)</name>
        <dbReference type="ChEBI" id="CHEBI:60539"/>
    </ligand>
</feature>
<feature type="binding site" evidence="1">
    <location>
        <position position="480"/>
    </location>
    <ligand>
        <name>Mo-bis(molybdopterin guanine dinucleotide)</name>
        <dbReference type="ChEBI" id="CHEBI:60539"/>
    </ligand>
</feature>
<feature type="binding site" evidence="1">
    <location>
        <begin position="506"/>
        <end position="507"/>
    </location>
    <ligand>
        <name>Mo-bis(molybdopterin guanine dinucleotide)</name>
        <dbReference type="ChEBI" id="CHEBI:60539"/>
    </ligand>
</feature>
<feature type="binding site" evidence="1">
    <location>
        <position position="529"/>
    </location>
    <ligand>
        <name>Mo-bis(molybdopterin guanine dinucleotide)</name>
        <dbReference type="ChEBI" id="CHEBI:60539"/>
    </ligand>
</feature>
<feature type="binding site" evidence="1">
    <location>
        <position position="556"/>
    </location>
    <ligand>
        <name>Mo-bis(molybdopterin guanine dinucleotide)</name>
        <dbReference type="ChEBI" id="CHEBI:60539"/>
    </ligand>
</feature>
<feature type="binding site" evidence="1">
    <location>
        <begin position="716"/>
        <end position="725"/>
    </location>
    <ligand>
        <name>Mo-bis(molybdopterin guanine dinucleotide)</name>
        <dbReference type="ChEBI" id="CHEBI:60539"/>
    </ligand>
</feature>
<feature type="binding site" evidence="1">
    <location>
        <position position="792"/>
    </location>
    <ligand>
        <name>substrate</name>
    </ligand>
</feature>
<feature type="binding site" evidence="1">
    <location>
        <position position="800"/>
    </location>
    <ligand>
        <name>Mo-bis(molybdopterin guanine dinucleotide)</name>
        <dbReference type="ChEBI" id="CHEBI:60539"/>
    </ligand>
</feature>
<feature type="binding site" evidence="1">
    <location>
        <position position="817"/>
    </location>
    <ligand>
        <name>Mo-bis(molybdopterin guanine dinucleotide)</name>
        <dbReference type="ChEBI" id="CHEBI:60539"/>
    </ligand>
</feature>
<accession>Q9I4G3</accession>
<keyword id="KW-0004">4Fe-4S</keyword>
<keyword id="KW-0249">Electron transport</keyword>
<keyword id="KW-0408">Iron</keyword>
<keyword id="KW-0411">Iron-sulfur</keyword>
<keyword id="KW-0479">Metal-binding</keyword>
<keyword id="KW-0500">Molybdenum</keyword>
<keyword id="KW-0534">Nitrate assimilation</keyword>
<keyword id="KW-0560">Oxidoreductase</keyword>
<keyword id="KW-0574">Periplasm</keyword>
<keyword id="KW-1185">Reference proteome</keyword>
<keyword id="KW-0732">Signal</keyword>
<keyword id="KW-0813">Transport</keyword>
<gene>
    <name evidence="1" type="primary">napA</name>
    <name type="ordered locus">PA1174</name>
</gene>
<evidence type="ECO:0000255" key="1">
    <source>
        <dbReference type="HAMAP-Rule" id="MF_01630"/>
    </source>
</evidence>